<reference key="1">
    <citation type="journal article" date="1992" name="Nucleic Acids Res.">
        <title>Streptomyces contain a 7.0 kDa cold shock like protein.</title>
        <authorList>
            <person name="Av-Gay Y."/>
            <person name="Aharonowitz Y."/>
            <person name="Cohen G."/>
        </authorList>
    </citation>
    <scope>NUCLEOTIDE SEQUENCE [GENOMIC DNA]</scope>
    <scope>PROTEIN SEQUENCE OF 1-40</scope>
    <source>
        <strain>ATCC 27064 / DSM 738 / JCM 4710 / NBRC 13307 / NCIMB 12785 / NRRL 3585 / VKM Ac-602</strain>
    </source>
</reference>
<gene>
    <name type="primary">SC7.0</name>
</gene>
<name>CSP7_STRCL</name>
<feature type="chain" id="PRO_0000100330" description="Cold shock-like protein 7.0">
    <location>
        <begin position="1"/>
        <end position="66"/>
    </location>
</feature>
<feature type="domain" description="CSD">
    <location>
        <begin position="4"/>
        <end position="63"/>
    </location>
</feature>
<keyword id="KW-0010">Activator</keyword>
<keyword id="KW-0963">Cytoplasm</keyword>
<keyword id="KW-0903">Direct protein sequencing</keyword>
<keyword id="KW-0238">DNA-binding</keyword>
<keyword id="KW-0346">Stress response</keyword>
<keyword id="KW-0804">Transcription</keyword>
<keyword id="KW-0805">Transcription regulation</keyword>
<dbReference type="EMBL" id="X68245">
    <property type="protein sequence ID" value="CAA48316.1"/>
    <property type="molecule type" value="Genomic_DNA"/>
</dbReference>
<dbReference type="PIR" id="S26378">
    <property type="entry name" value="S26378"/>
</dbReference>
<dbReference type="SMR" id="Q01761"/>
<dbReference type="STRING" id="1901.BB341_10920"/>
<dbReference type="eggNOG" id="COG1278">
    <property type="taxonomic scope" value="Bacteria"/>
</dbReference>
<dbReference type="GO" id="GO:0005737">
    <property type="term" value="C:cytoplasm"/>
    <property type="evidence" value="ECO:0007669"/>
    <property type="project" value="UniProtKB-SubCell"/>
</dbReference>
<dbReference type="GO" id="GO:0003677">
    <property type="term" value="F:DNA binding"/>
    <property type="evidence" value="ECO:0007669"/>
    <property type="project" value="UniProtKB-KW"/>
</dbReference>
<dbReference type="CDD" id="cd04458">
    <property type="entry name" value="CSP_CDS"/>
    <property type="match status" value="1"/>
</dbReference>
<dbReference type="FunFam" id="2.40.50.140:FF:000006">
    <property type="entry name" value="Cold shock protein CspC"/>
    <property type="match status" value="1"/>
</dbReference>
<dbReference type="Gene3D" id="2.40.50.140">
    <property type="entry name" value="Nucleic acid-binding proteins"/>
    <property type="match status" value="1"/>
</dbReference>
<dbReference type="InterPro" id="IPR012156">
    <property type="entry name" value="Cold_shock_CspA"/>
</dbReference>
<dbReference type="InterPro" id="IPR050181">
    <property type="entry name" value="Cold_shock_domain"/>
</dbReference>
<dbReference type="InterPro" id="IPR011129">
    <property type="entry name" value="CSD"/>
</dbReference>
<dbReference type="InterPro" id="IPR019844">
    <property type="entry name" value="CSD_CS"/>
</dbReference>
<dbReference type="InterPro" id="IPR002059">
    <property type="entry name" value="CSP_DNA-bd"/>
</dbReference>
<dbReference type="InterPro" id="IPR012340">
    <property type="entry name" value="NA-bd_OB-fold"/>
</dbReference>
<dbReference type="PANTHER" id="PTHR11544">
    <property type="entry name" value="COLD SHOCK DOMAIN CONTAINING PROTEINS"/>
    <property type="match status" value="1"/>
</dbReference>
<dbReference type="Pfam" id="PF00313">
    <property type="entry name" value="CSD"/>
    <property type="match status" value="1"/>
</dbReference>
<dbReference type="PIRSF" id="PIRSF002599">
    <property type="entry name" value="Cold_shock_A"/>
    <property type="match status" value="1"/>
</dbReference>
<dbReference type="PRINTS" id="PR00050">
    <property type="entry name" value="COLDSHOCK"/>
</dbReference>
<dbReference type="SMART" id="SM00357">
    <property type="entry name" value="CSP"/>
    <property type="match status" value="1"/>
</dbReference>
<dbReference type="SUPFAM" id="SSF50249">
    <property type="entry name" value="Nucleic acid-binding proteins"/>
    <property type="match status" value="1"/>
</dbReference>
<dbReference type="PROSITE" id="PS00352">
    <property type="entry name" value="CSD_1"/>
    <property type="match status" value="1"/>
</dbReference>
<dbReference type="PROSITE" id="PS51857">
    <property type="entry name" value="CSD_2"/>
    <property type="match status" value="1"/>
</dbReference>
<organism>
    <name type="scientific">Streptomyces clavuligerus</name>
    <dbReference type="NCBI Taxonomy" id="1901"/>
    <lineage>
        <taxon>Bacteria</taxon>
        <taxon>Bacillati</taxon>
        <taxon>Actinomycetota</taxon>
        <taxon>Actinomycetes</taxon>
        <taxon>Kitasatosporales</taxon>
        <taxon>Streptomycetaceae</taxon>
        <taxon>Streptomyces</taxon>
    </lineage>
</organism>
<sequence length="66" mass="7016">MATGTVKWFNAEKGFGFIAQDGGGPDVFVHYSAINATGFRSLEENQVVNFDVTHGEGPQAENVSPA</sequence>
<evidence type="ECO:0000250" key="1"/>
<comment type="subcellular location">
    <subcellularLocation>
        <location evidence="1">Cytoplasm</location>
    </subcellularLocation>
</comment>
<comment type="induction">
    <text>In response to low temperature.</text>
</comment>
<proteinExistence type="evidence at protein level"/>
<accession>Q01761</accession>
<protein>
    <recommendedName>
        <fullName>Cold shock-like protein 7.0</fullName>
    </recommendedName>
</protein>